<dbReference type="EC" id="2.7.7.8" evidence="1"/>
<dbReference type="EMBL" id="Z84207">
    <property type="protein sequence ID" value="CAB06341.1"/>
    <property type="molecule type" value="Genomic_DNA"/>
</dbReference>
<dbReference type="RefSeq" id="WP_011173207.1">
    <property type="nucleotide sequence ID" value="NZ_CP144687.1"/>
</dbReference>
<dbReference type="SMR" id="Q9ZAE1"/>
<dbReference type="BRENDA" id="2.7.7.8">
    <property type="organism ID" value="2305"/>
</dbReference>
<dbReference type="GO" id="GO:0005829">
    <property type="term" value="C:cytosol"/>
    <property type="evidence" value="ECO:0007669"/>
    <property type="project" value="TreeGrafter"/>
</dbReference>
<dbReference type="GO" id="GO:0000175">
    <property type="term" value="F:3'-5'-RNA exonuclease activity"/>
    <property type="evidence" value="ECO:0007669"/>
    <property type="project" value="TreeGrafter"/>
</dbReference>
<dbReference type="GO" id="GO:0000287">
    <property type="term" value="F:magnesium ion binding"/>
    <property type="evidence" value="ECO:0007669"/>
    <property type="project" value="UniProtKB-UniRule"/>
</dbReference>
<dbReference type="GO" id="GO:0004654">
    <property type="term" value="F:polyribonucleotide nucleotidyltransferase activity"/>
    <property type="evidence" value="ECO:0007669"/>
    <property type="project" value="UniProtKB-UniRule"/>
</dbReference>
<dbReference type="GO" id="GO:0003723">
    <property type="term" value="F:RNA binding"/>
    <property type="evidence" value="ECO:0007669"/>
    <property type="project" value="UniProtKB-UniRule"/>
</dbReference>
<dbReference type="GO" id="GO:0006402">
    <property type="term" value="P:mRNA catabolic process"/>
    <property type="evidence" value="ECO:0007669"/>
    <property type="project" value="UniProtKB-UniRule"/>
</dbReference>
<dbReference type="GO" id="GO:0006396">
    <property type="term" value="P:RNA processing"/>
    <property type="evidence" value="ECO:0007669"/>
    <property type="project" value="InterPro"/>
</dbReference>
<dbReference type="CDD" id="cd02393">
    <property type="entry name" value="KH-I_PNPase"/>
    <property type="match status" value="1"/>
</dbReference>
<dbReference type="CDD" id="cd11363">
    <property type="entry name" value="RNase_PH_PNPase_1"/>
    <property type="match status" value="1"/>
</dbReference>
<dbReference type="CDD" id="cd11364">
    <property type="entry name" value="RNase_PH_PNPase_2"/>
    <property type="match status" value="1"/>
</dbReference>
<dbReference type="CDD" id="cd04472">
    <property type="entry name" value="S1_PNPase"/>
    <property type="match status" value="1"/>
</dbReference>
<dbReference type="FunFam" id="3.30.1370.10:FF:000001">
    <property type="entry name" value="Polyribonucleotide nucleotidyltransferase"/>
    <property type="match status" value="1"/>
</dbReference>
<dbReference type="FunFam" id="3.30.230.70:FF:000001">
    <property type="entry name" value="Polyribonucleotide nucleotidyltransferase"/>
    <property type="match status" value="1"/>
</dbReference>
<dbReference type="FunFam" id="3.30.230.70:FF:000002">
    <property type="entry name" value="Polyribonucleotide nucleotidyltransferase"/>
    <property type="match status" value="1"/>
</dbReference>
<dbReference type="FunFam" id="2.40.50.140:FF:000189">
    <property type="entry name" value="Polyribonucleotide nucleotidyltransferase, putative"/>
    <property type="match status" value="1"/>
</dbReference>
<dbReference type="Gene3D" id="3.30.230.70">
    <property type="entry name" value="GHMP Kinase, N-terminal domain"/>
    <property type="match status" value="2"/>
</dbReference>
<dbReference type="Gene3D" id="3.30.1370.10">
    <property type="entry name" value="K Homology domain, type 1"/>
    <property type="match status" value="1"/>
</dbReference>
<dbReference type="Gene3D" id="2.40.50.140">
    <property type="entry name" value="Nucleic acid-binding proteins"/>
    <property type="match status" value="1"/>
</dbReference>
<dbReference type="HAMAP" id="MF_01595">
    <property type="entry name" value="PNPase"/>
    <property type="match status" value="1"/>
</dbReference>
<dbReference type="InterPro" id="IPR001247">
    <property type="entry name" value="ExoRNase_PH_dom1"/>
</dbReference>
<dbReference type="InterPro" id="IPR015847">
    <property type="entry name" value="ExoRNase_PH_dom2"/>
</dbReference>
<dbReference type="InterPro" id="IPR036345">
    <property type="entry name" value="ExoRNase_PH_dom2_sf"/>
</dbReference>
<dbReference type="InterPro" id="IPR004087">
    <property type="entry name" value="KH_dom"/>
</dbReference>
<dbReference type="InterPro" id="IPR004088">
    <property type="entry name" value="KH_dom_type_1"/>
</dbReference>
<dbReference type="InterPro" id="IPR036612">
    <property type="entry name" value="KH_dom_type_1_sf"/>
</dbReference>
<dbReference type="InterPro" id="IPR012340">
    <property type="entry name" value="NA-bd_OB-fold"/>
</dbReference>
<dbReference type="InterPro" id="IPR012162">
    <property type="entry name" value="PNPase"/>
</dbReference>
<dbReference type="InterPro" id="IPR027408">
    <property type="entry name" value="PNPase/RNase_PH_dom_sf"/>
</dbReference>
<dbReference type="InterPro" id="IPR015848">
    <property type="entry name" value="PNPase_PH_RNA-bd_bac/org-type"/>
</dbReference>
<dbReference type="InterPro" id="IPR020568">
    <property type="entry name" value="Ribosomal_Su5_D2-typ_SF"/>
</dbReference>
<dbReference type="InterPro" id="IPR003029">
    <property type="entry name" value="S1_domain"/>
</dbReference>
<dbReference type="NCBIfam" id="TIGR03591">
    <property type="entry name" value="polynuc_phos"/>
    <property type="match status" value="1"/>
</dbReference>
<dbReference type="NCBIfam" id="NF008805">
    <property type="entry name" value="PRK11824.1"/>
    <property type="match status" value="1"/>
</dbReference>
<dbReference type="PANTHER" id="PTHR11252">
    <property type="entry name" value="POLYRIBONUCLEOTIDE NUCLEOTIDYLTRANSFERASE"/>
    <property type="match status" value="1"/>
</dbReference>
<dbReference type="PANTHER" id="PTHR11252:SF0">
    <property type="entry name" value="POLYRIBONUCLEOTIDE NUCLEOTIDYLTRANSFERASE 1, MITOCHONDRIAL"/>
    <property type="match status" value="1"/>
</dbReference>
<dbReference type="Pfam" id="PF00013">
    <property type="entry name" value="KH_1"/>
    <property type="match status" value="1"/>
</dbReference>
<dbReference type="Pfam" id="PF03726">
    <property type="entry name" value="PNPase"/>
    <property type="match status" value="1"/>
</dbReference>
<dbReference type="Pfam" id="PF01138">
    <property type="entry name" value="RNase_PH"/>
    <property type="match status" value="2"/>
</dbReference>
<dbReference type="Pfam" id="PF03725">
    <property type="entry name" value="RNase_PH_C"/>
    <property type="match status" value="2"/>
</dbReference>
<dbReference type="Pfam" id="PF00575">
    <property type="entry name" value="S1"/>
    <property type="match status" value="1"/>
</dbReference>
<dbReference type="PIRSF" id="PIRSF005499">
    <property type="entry name" value="PNPase"/>
    <property type="match status" value="1"/>
</dbReference>
<dbReference type="SMART" id="SM00322">
    <property type="entry name" value="KH"/>
    <property type="match status" value="1"/>
</dbReference>
<dbReference type="SMART" id="SM00316">
    <property type="entry name" value="S1"/>
    <property type="match status" value="1"/>
</dbReference>
<dbReference type="SUPFAM" id="SSF54791">
    <property type="entry name" value="Eukaryotic type KH-domain (KH-domain type I)"/>
    <property type="match status" value="1"/>
</dbReference>
<dbReference type="SUPFAM" id="SSF50249">
    <property type="entry name" value="Nucleic acid-binding proteins"/>
    <property type="match status" value="1"/>
</dbReference>
<dbReference type="SUPFAM" id="SSF55666">
    <property type="entry name" value="Ribonuclease PH domain 2-like"/>
    <property type="match status" value="2"/>
</dbReference>
<dbReference type="SUPFAM" id="SSF54211">
    <property type="entry name" value="Ribosomal protein S5 domain 2-like"/>
    <property type="match status" value="2"/>
</dbReference>
<dbReference type="PROSITE" id="PS50084">
    <property type="entry name" value="KH_TYPE_1"/>
    <property type="match status" value="1"/>
</dbReference>
<dbReference type="PROSITE" id="PS50126">
    <property type="entry name" value="S1"/>
    <property type="match status" value="1"/>
</dbReference>
<evidence type="ECO:0000255" key="1">
    <source>
        <dbReference type="HAMAP-Rule" id="MF_01595"/>
    </source>
</evidence>
<feature type="chain" id="PRO_0000329915" description="Polyribonucleotide nucleotidyltransferase">
    <location>
        <begin position="1"/>
        <end position="713"/>
    </location>
</feature>
<feature type="domain" description="KH" evidence="1">
    <location>
        <begin position="565"/>
        <end position="631"/>
    </location>
</feature>
<feature type="domain" description="S1 motif" evidence="1">
    <location>
        <begin position="633"/>
        <end position="701"/>
    </location>
</feature>
<feature type="binding site" evidence="1">
    <location>
        <position position="498"/>
    </location>
    <ligand>
        <name>Mg(2+)</name>
        <dbReference type="ChEBI" id="CHEBI:18420"/>
    </ligand>
</feature>
<feature type="binding site" evidence="1">
    <location>
        <position position="504"/>
    </location>
    <ligand>
        <name>Mg(2+)</name>
        <dbReference type="ChEBI" id="CHEBI:18420"/>
    </ligand>
</feature>
<comment type="function">
    <text evidence="1">Involved in mRNA degradation. Catalyzes the phosphorolysis of single-stranded polyribonucleotides processively in the 3'- to 5'-direction.</text>
</comment>
<comment type="catalytic activity">
    <reaction evidence="1">
        <text>RNA(n+1) + phosphate = RNA(n) + a ribonucleoside 5'-diphosphate</text>
        <dbReference type="Rhea" id="RHEA:22096"/>
        <dbReference type="Rhea" id="RHEA-COMP:14527"/>
        <dbReference type="Rhea" id="RHEA-COMP:17342"/>
        <dbReference type="ChEBI" id="CHEBI:43474"/>
        <dbReference type="ChEBI" id="CHEBI:57930"/>
        <dbReference type="ChEBI" id="CHEBI:140395"/>
        <dbReference type="EC" id="2.7.7.8"/>
    </reaction>
</comment>
<comment type="cofactor">
    <cofactor evidence="1">
        <name>Mg(2+)</name>
        <dbReference type="ChEBI" id="CHEBI:18420"/>
    </cofactor>
</comment>
<comment type="subcellular location">
    <subcellularLocation>
        <location evidence="1">Cytoplasm</location>
    </subcellularLocation>
</comment>
<comment type="similarity">
    <text evidence="1">Belongs to the polyribonucleotide nucleotidyltransferase family.</text>
</comment>
<proteinExistence type="inferred from homology"/>
<accession>Q9ZAE1</accession>
<sequence length="713" mass="78193">MEGTPNVPQAHRYELTLAGRPLVLETGKYAKQASGSVLVRYADTVVLATAQASETPVEADFLPLTVEFEERHYAVGKIPGSFMRREGRPGEKAILSARMTDRPIRPLFPKGFRHEVQIIVTVLSADQKNPPDILGPIAASAALMLSDIPWEGPIAAVRVGLIGGSFVLNPTLQELEESQLDLVVAGSKEAILMVEAEAGEVDEETLVQALEFAHKEMQPILELQEAMARELAKPKMAWTPPESLPEEEKEALYRLALERGLSQVLQTASKGERSRALAEFAERLIAEALPKGEDGTPDEGKKPLYESAFDEVVRRELRRLVLEEGKRADGRGPKDLRPIWIEVDVLPRAHGSAVFTRGETQVLGTVTLGTGRDEQILDDLGIDETEKFLVHYNFPPFSTGEVRRLRGVSRREVGHGNLAKRALKAVMPKEEDFPYTIRVVGDVLESNGSSSMATVCAGCLALMDAGVPIRAPVAGVAMGLVWEENRAVILTDILGLEDALGDMDFKVAGTRKGVTALQMDNKVGGLPREVLKEALLQAREARLKILDLMETVLPAPRPELKPFAPRILSLKVPVEKIGLVIGPGGKNVRALEELGVEVDIEEDGTVRIYSSDLNAALEAKKRIEDLTREAKVGEIYEGTVTRITPFGAFISLFPGTEGLLHISQIAPGRVERVEDHLKVGDVIKVKVHRIDERGKIDLIRPELEGKIPPRRRK</sequence>
<reference key="1">
    <citation type="submission" date="1997-01" db="EMBL/GenBank/DDBJ databases">
        <title>Polynucleotide phosphorylase from Thermus thermophilus: cloning, sequencing and expression of the gene and biochemical properties of the enzyme.</title>
        <authorList>
            <person name="Serganov A.A."/>
            <person name="Garber M.B."/>
            <person name="Portier C."/>
        </authorList>
    </citation>
    <scope>NUCLEOTIDE SEQUENCE [GENOMIC DNA]</scope>
    <source>
        <strain>VK1</strain>
    </source>
</reference>
<organism>
    <name type="scientific">Thermus thermophilus</name>
    <dbReference type="NCBI Taxonomy" id="274"/>
    <lineage>
        <taxon>Bacteria</taxon>
        <taxon>Thermotogati</taxon>
        <taxon>Deinococcota</taxon>
        <taxon>Deinococci</taxon>
        <taxon>Thermales</taxon>
        <taxon>Thermaceae</taxon>
        <taxon>Thermus</taxon>
    </lineage>
</organism>
<protein>
    <recommendedName>
        <fullName evidence="1">Polyribonucleotide nucleotidyltransferase</fullName>
        <ecNumber evidence="1">2.7.7.8</ecNumber>
    </recommendedName>
    <alternativeName>
        <fullName evidence="1">Polynucleotide phosphorylase</fullName>
        <shortName evidence="1">PNPase</shortName>
    </alternativeName>
</protein>
<keyword id="KW-0963">Cytoplasm</keyword>
<keyword id="KW-0460">Magnesium</keyword>
<keyword id="KW-0479">Metal-binding</keyword>
<keyword id="KW-0548">Nucleotidyltransferase</keyword>
<keyword id="KW-0694">RNA-binding</keyword>
<keyword id="KW-0808">Transferase</keyword>
<gene>
    <name evidence="1" type="primary">pnp</name>
</gene>
<name>PNP_THETH</name>